<accession>Q9BYG4</accession>
<accession>A8QM57</accession>
<name>PAR6G_HUMAN</name>
<dbReference type="EMBL" id="AB044556">
    <property type="protein sequence ID" value="BAB40757.1"/>
    <property type="molecule type" value="mRNA"/>
</dbReference>
<dbReference type="EMBL" id="AB178536">
    <property type="protein sequence ID" value="BAF92015.1"/>
    <property type="molecule type" value="mRNA"/>
</dbReference>
<dbReference type="EMBL" id="AC139100">
    <property type="status" value="NOT_ANNOTATED_CDS"/>
    <property type="molecule type" value="Genomic_DNA"/>
</dbReference>
<dbReference type="EMBL" id="BC060797">
    <property type="protein sequence ID" value="AAH60797.1"/>
    <property type="molecule type" value="mRNA"/>
</dbReference>
<dbReference type="CCDS" id="CCDS12022.1">
    <molecule id="Q9BYG4-1"/>
</dbReference>
<dbReference type="RefSeq" id="NP_115899.1">
    <molecule id="Q9BYG4-1"/>
    <property type="nucleotide sequence ID" value="NM_032510.4"/>
</dbReference>
<dbReference type="SMR" id="Q9BYG4"/>
<dbReference type="BioGRID" id="124135">
    <property type="interactions" value="44"/>
</dbReference>
<dbReference type="ComplexPortal" id="CPX-6194">
    <property type="entry name" value="PAR cell polarity complex, PARD6G-PRKCI variant"/>
</dbReference>
<dbReference type="ComplexPortal" id="CPX-6195">
    <property type="entry name" value="PAR cell polarity complex, PARD6G-PRKCZ variant"/>
</dbReference>
<dbReference type="FunCoup" id="Q9BYG4">
    <property type="interactions" value="1963"/>
</dbReference>
<dbReference type="IntAct" id="Q9BYG4">
    <property type="interactions" value="17"/>
</dbReference>
<dbReference type="MINT" id="Q9BYG4"/>
<dbReference type="STRING" id="9606.ENSP00000343144"/>
<dbReference type="iPTMnet" id="Q9BYG4"/>
<dbReference type="PhosphoSitePlus" id="Q9BYG4"/>
<dbReference type="BioMuta" id="PARD6G"/>
<dbReference type="DMDM" id="30913175"/>
<dbReference type="jPOST" id="Q9BYG4"/>
<dbReference type="MassIVE" id="Q9BYG4"/>
<dbReference type="PaxDb" id="9606-ENSP00000343144"/>
<dbReference type="PeptideAtlas" id="Q9BYG4"/>
<dbReference type="ProteomicsDB" id="79638">
    <molecule id="Q9BYG4-1"/>
</dbReference>
<dbReference type="Pumba" id="Q9BYG4"/>
<dbReference type="Antibodypedia" id="23537">
    <property type="antibodies" value="98 antibodies from 18 providers"/>
</dbReference>
<dbReference type="DNASU" id="84552"/>
<dbReference type="Ensembl" id="ENST00000353265.8">
    <molecule id="Q9BYG4-1"/>
    <property type="protein sequence ID" value="ENSP00000343144.3"/>
    <property type="gene ID" value="ENSG00000178184.16"/>
</dbReference>
<dbReference type="Ensembl" id="ENST00000470488.2">
    <molecule id="Q9BYG4-2"/>
    <property type="protein sequence ID" value="ENSP00000468735.1"/>
    <property type="gene ID" value="ENSG00000178184.16"/>
</dbReference>
<dbReference type="GeneID" id="84552"/>
<dbReference type="KEGG" id="hsa:84552"/>
<dbReference type="MANE-Select" id="ENST00000353265.8">
    <property type="protein sequence ID" value="ENSP00000343144.3"/>
    <property type="RefSeq nucleotide sequence ID" value="NM_032510.4"/>
    <property type="RefSeq protein sequence ID" value="NP_115899.1"/>
</dbReference>
<dbReference type="UCSC" id="uc002lny.4">
    <molecule id="Q9BYG4-1"/>
    <property type="organism name" value="human"/>
</dbReference>
<dbReference type="AGR" id="HGNC:16076"/>
<dbReference type="CTD" id="84552"/>
<dbReference type="DisGeNET" id="84552"/>
<dbReference type="GeneCards" id="PARD6G"/>
<dbReference type="HGNC" id="HGNC:16076">
    <property type="gene designation" value="PARD6G"/>
</dbReference>
<dbReference type="HPA" id="ENSG00000178184">
    <property type="expression patterns" value="Tissue enhanced (skin)"/>
</dbReference>
<dbReference type="MIM" id="608976">
    <property type="type" value="gene"/>
</dbReference>
<dbReference type="neXtProt" id="NX_Q9BYG4"/>
<dbReference type="OpenTargets" id="ENSG00000178184"/>
<dbReference type="PharmGKB" id="PA32939"/>
<dbReference type="VEuPathDB" id="HostDB:ENSG00000178184"/>
<dbReference type="eggNOG" id="KOG3606">
    <property type="taxonomic scope" value="Eukaryota"/>
</dbReference>
<dbReference type="GeneTree" id="ENSGT00950000183211"/>
<dbReference type="HOGENOM" id="CLU_040653_2_0_1"/>
<dbReference type="InParanoid" id="Q9BYG4"/>
<dbReference type="OMA" id="TEQSFDK"/>
<dbReference type="OrthoDB" id="5868434at2759"/>
<dbReference type="PAN-GO" id="Q9BYG4">
    <property type="GO annotations" value="7 GO annotations based on evolutionary models"/>
</dbReference>
<dbReference type="PhylomeDB" id="Q9BYG4"/>
<dbReference type="TreeFam" id="TF312899"/>
<dbReference type="PathwayCommons" id="Q9BYG4"/>
<dbReference type="Reactome" id="R-HSA-420029">
    <property type="pathway name" value="Tight junction interactions"/>
</dbReference>
<dbReference type="SignaLink" id="Q9BYG4"/>
<dbReference type="BioGRID-ORCS" id="84552">
    <property type="hits" value="9 hits in 1152 CRISPR screens"/>
</dbReference>
<dbReference type="CD-CODE" id="8C2F96ED">
    <property type="entry name" value="Centrosome"/>
</dbReference>
<dbReference type="ChiTaRS" id="PARD6G">
    <property type="organism name" value="human"/>
</dbReference>
<dbReference type="GenomeRNAi" id="84552"/>
<dbReference type="Pharos" id="Q9BYG4">
    <property type="development level" value="Tbio"/>
</dbReference>
<dbReference type="PRO" id="PR:Q9BYG4"/>
<dbReference type="Proteomes" id="UP000005640">
    <property type="component" value="Chromosome 18"/>
</dbReference>
<dbReference type="RNAct" id="Q9BYG4">
    <property type="molecule type" value="protein"/>
</dbReference>
<dbReference type="Bgee" id="ENSG00000178184">
    <property type="expression patterns" value="Expressed in upper arm skin and 159 other cell types or tissues"/>
</dbReference>
<dbReference type="ExpressionAtlas" id="Q9BYG4">
    <property type="expression patterns" value="baseline and differential"/>
</dbReference>
<dbReference type="GO" id="GO:0016324">
    <property type="term" value="C:apical plasma membrane"/>
    <property type="evidence" value="ECO:0000318"/>
    <property type="project" value="GO_Central"/>
</dbReference>
<dbReference type="GO" id="GO:0005923">
    <property type="term" value="C:bicellular tight junction"/>
    <property type="evidence" value="ECO:0007669"/>
    <property type="project" value="UniProtKB-SubCell"/>
</dbReference>
<dbReference type="GO" id="GO:0005938">
    <property type="term" value="C:cell cortex"/>
    <property type="evidence" value="ECO:0000318"/>
    <property type="project" value="GO_Central"/>
</dbReference>
<dbReference type="GO" id="GO:0005829">
    <property type="term" value="C:cytosol"/>
    <property type="evidence" value="ECO:0000304"/>
    <property type="project" value="Reactome"/>
</dbReference>
<dbReference type="GO" id="GO:0005634">
    <property type="term" value="C:nucleus"/>
    <property type="evidence" value="ECO:0000318"/>
    <property type="project" value="GO_Central"/>
</dbReference>
<dbReference type="GO" id="GO:0120157">
    <property type="term" value="C:PAR polarity complex"/>
    <property type="evidence" value="ECO:0000250"/>
    <property type="project" value="ComplexPortal"/>
</dbReference>
<dbReference type="GO" id="GO:0005886">
    <property type="term" value="C:plasma membrane"/>
    <property type="evidence" value="ECO:0000304"/>
    <property type="project" value="Reactome"/>
</dbReference>
<dbReference type="GO" id="GO:0070160">
    <property type="term" value="C:tight junction"/>
    <property type="evidence" value="ECO:0000303"/>
    <property type="project" value="ComplexPortal"/>
</dbReference>
<dbReference type="GO" id="GO:0051301">
    <property type="term" value="P:cell division"/>
    <property type="evidence" value="ECO:0007669"/>
    <property type="project" value="UniProtKB-KW"/>
</dbReference>
<dbReference type="GO" id="GO:0007098">
    <property type="term" value="P:centrosome cycle"/>
    <property type="evidence" value="ECO:0000318"/>
    <property type="project" value="GO_Central"/>
</dbReference>
<dbReference type="GO" id="GO:0007163">
    <property type="term" value="P:establishment or maintenance of cell polarity"/>
    <property type="evidence" value="ECO:0000318"/>
    <property type="project" value="GO_Central"/>
</dbReference>
<dbReference type="GO" id="GO:0045197">
    <property type="term" value="P:establishment or maintenance of epithelial cell apical/basal polarity"/>
    <property type="evidence" value="ECO:0000250"/>
    <property type="project" value="ComplexPortal"/>
</dbReference>
<dbReference type="GO" id="GO:0060341">
    <property type="term" value="P:regulation of cellular localization"/>
    <property type="evidence" value="ECO:0000318"/>
    <property type="project" value="GO_Central"/>
</dbReference>
<dbReference type="CDD" id="cd06403">
    <property type="entry name" value="PB1_Par6"/>
    <property type="match status" value="1"/>
</dbReference>
<dbReference type="CDD" id="cd06718">
    <property type="entry name" value="PDZ_Par6-like"/>
    <property type="match status" value="1"/>
</dbReference>
<dbReference type="FunFam" id="3.10.20.90:FF:000031">
    <property type="entry name" value="Partitioning defective 6 homolog alpha"/>
    <property type="match status" value="1"/>
</dbReference>
<dbReference type="FunFam" id="2.30.42.10:FF:000030">
    <property type="entry name" value="Partitioning defective 6 homolog beta"/>
    <property type="match status" value="1"/>
</dbReference>
<dbReference type="Gene3D" id="2.30.42.10">
    <property type="match status" value="1"/>
</dbReference>
<dbReference type="Gene3D" id="3.10.20.90">
    <property type="entry name" value="Phosphatidylinositol 3-kinase Catalytic Subunit, Chain A, domain 1"/>
    <property type="match status" value="1"/>
</dbReference>
<dbReference type="InterPro" id="IPR051741">
    <property type="entry name" value="PAR6_homolog"/>
</dbReference>
<dbReference type="InterPro" id="IPR053793">
    <property type="entry name" value="PB1-like"/>
</dbReference>
<dbReference type="InterPro" id="IPR000270">
    <property type="entry name" value="PB1_dom"/>
</dbReference>
<dbReference type="InterPro" id="IPR034868">
    <property type="entry name" value="PB1_Par6"/>
</dbReference>
<dbReference type="InterPro" id="IPR001478">
    <property type="entry name" value="PDZ"/>
</dbReference>
<dbReference type="InterPro" id="IPR036034">
    <property type="entry name" value="PDZ_sf"/>
</dbReference>
<dbReference type="PANTHER" id="PTHR14102">
    <property type="entry name" value="PAR-6-RELATED"/>
    <property type="match status" value="1"/>
</dbReference>
<dbReference type="PANTHER" id="PTHR14102:SF3">
    <property type="entry name" value="PARTITIONING DEFECTIVE 6 HOMOLOG GAMMA"/>
    <property type="match status" value="1"/>
</dbReference>
<dbReference type="Pfam" id="PF00564">
    <property type="entry name" value="PB1"/>
    <property type="match status" value="1"/>
</dbReference>
<dbReference type="Pfam" id="PF00595">
    <property type="entry name" value="PDZ"/>
    <property type="match status" value="1"/>
</dbReference>
<dbReference type="SMART" id="SM00666">
    <property type="entry name" value="PB1"/>
    <property type="match status" value="1"/>
</dbReference>
<dbReference type="SMART" id="SM00228">
    <property type="entry name" value="PDZ"/>
    <property type="match status" value="1"/>
</dbReference>
<dbReference type="SUPFAM" id="SSF54277">
    <property type="entry name" value="CAD &amp; PB1 domains"/>
    <property type="match status" value="1"/>
</dbReference>
<dbReference type="SUPFAM" id="SSF50156">
    <property type="entry name" value="PDZ domain-like"/>
    <property type="match status" value="1"/>
</dbReference>
<dbReference type="PROSITE" id="PS51745">
    <property type="entry name" value="PB1"/>
    <property type="match status" value="1"/>
</dbReference>
<dbReference type="PROSITE" id="PS50106">
    <property type="entry name" value="PDZ"/>
    <property type="match status" value="1"/>
</dbReference>
<proteinExistence type="evidence at protein level"/>
<organism>
    <name type="scientific">Homo sapiens</name>
    <name type="common">Human</name>
    <dbReference type="NCBI Taxonomy" id="9606"/>
    <lineage>
        <taxon>Eukaryota</taxon>
        <taxon>Metazoa</taxon>
        <taxon>Chordata</taxon>
        <taxon>Craniata</taxon>
        <taxon>Vertebrata</taxon>
        <taxon>Euteleostomi</taxon>
        <taxon>Mammalia</taxon>
        <taxon>Eutheria</taxon>
        <taxon>Euarchontoglires</taxon>
        <taxon>Primates</taxon>
        <taxon>Haplorrhini</taxon>
        <taxon>Catarrhini</taxon>
        <taxon>Hominidae</taxon>
        <taxon>Homo</taxon>
    </lineage>
</organism>
<sequence length="376" mass="40883">MNRSFHKSQTLRFYDCSAVEVKSKFGAEFRRFSLDRHKPGKFEDFYKLVVHTHHISNSDVTIGYADVHGDLLPINNDDNFCKAVSSANPLLRVFIQKREEAERGSLGAGSLCRRRRALGALRDEGPRRRAHLDIGLPRDFRPVSSIIDVDLVPETHRRVRLHRHGCEKPLGFYIRDGASVRVTPHGLEKVPGIFISRMVPGGLAESTGLLAVNDEVLEVNGIEVAGKTLDQVTDMMIANSHNLIVTVKPANQRNNVVRGGRALGSSGPPSDGTAGFVGPPAPRVLQNFHPDEAESDEDNDVVIEGTLEPARPPQTPGAPAGSLSRVNGAGLAQRLQRDLALDGGLQRLLSSLRADPRHSLALPPGGVEEHGPAVTL</sequence>
<comment type="function">
    <text evidence="1">Adapter protein involved in asymmetrical cell division and cell polarization processes. May play a role in the formation of epithelial tight junctions. The PARD6-PARD3 complex links GTP-bound Rho small GTPases to atypical protein kinase C proteins (By similarity).</text>
</comment>
<comment type="subunit">
    <text evidence="5 6 8">Interacts with PARD3 (Probable). Interacts with GTP-bound forms of CDC42, RHOQ/TC10 and RAC1. Interacts with the N-terminal part of PRKCI and PRKCZ.</text>
</comment>
<comment type="interaction">
    <interactant intactId="EBI-295417">
        <id>Q9BYG4</id>
    </interactant>
    <interactant intactId="EBI-81752">
        <id>P60953</id>
        <label>CDC42</label>
    </interactant>
    <organismsDiffer>false</organismsDiffer>
    <experiments>5</experiments>
</comment>
<comment type="interaction">
    <interactant intactId="EBI-295417">
        <id>Q9BYG4</id>
    </interactant>
    <interactant intactId="EBI-516560">
        <id>Q7KZI7</id>
        <label>MARK2</label>
    </interactant>
    <organismsDiffer>false</organismsDiffer>
    <experiments>2</experiments>
</comment>
<comment type="interaction">
    <interactant intactId="EBI-295417">
        <id>Q9BYG4</id>
    </interactant>
    <interactant intactId="EBI-302319">
        <id>Q96L34</id>
        <label>MARK4</label>
    </interactant>
    <organismsDiffer>false</organismsDiffer>
    <experiments>2</experiments>
</comment>
<comment type="interaction">
    <interactant intactId="EBI-295417">
        <id>Q9BYG4</id>
    </interactant>
    <interactant intactId="EBI-81968">
        <id>Q8TEW0</id>
        <label>PARD3</label>
    </interactant>
    <organismsDiffer>false</organismsDiffer>
    <experiments>3</experiments>
</comment>
<comment type="interaction">
    <interactant intactId="EBI-295417">
        <id>Q9BYG4</id>
    </interactant>
    <interactant intactId="EBI-286199">
        <id>P41743</id>
        <label>PRKCI</label>
    </interactant>
    <organismsDiffer>false</organismsDiffer>
    <experiments>7</experiments>
</comment>
<comment type="interaction">
    <interactant intactId="EBI-295417">
        <id>Q9BYG4</id>
    </interactant>
    <interactant intactId="EBI-295351">
        <id>Q05513</id>
        <label>PRKCZ</label>
    </interactant>
    <organismsDiffer>false</organismsDiffer>
    <experiments>9</experiments>
</comment>
<comment type="interaction">
    <interactant intactId="EBI-295417">
        <id>Q9BYG4</id>
    </interactant>
    <interactant intactId="EBI-413628">
        <id>P63000</id>
        <label>RAC1</label>
    </interactant>
    <organismsDiffer>false</organismsDiffer>
    <experiments>2</experiments>
</comment>
<comment type="interaction">
    <interactant intactId="EBI-295417">
        <id>Q9BYG4</id>
    </interactant>
    <interactant intactId="EBI-306940">
        <id>Q04917</id>
        <label>YWHAH</label>
    </interactant>
    <organismsDiffer>false</organismsDiffer>
    <experiments>2</experiments>
</comment>
<comment type="subcellular location">
    <subcellularLocation>
        <location>Cytoplasm</location>
    </subcellularLocation>
    <subcellularLocation>
        <location evidence="1">Cell membrane</location>
    </subcellularLocation>
    <subcellularLocation>
        <location evidence="1">Cell junction</location>
        <location evidence="1">Tight junction</location>
    </subcellularLocation>
</comment>
<comment type="alternative products">
    <event type="alternative splicing"/>
    <isoform>
        <id>Q9BYG4-1</id>
        <name>1</name>
        <sequence type="displayed"/>
    </isoform>
    <isoform>
        <id>Q9BYG4-2</id>
        <name>2</name>
        <sequence type="described" ref="VSP_047586 VSP_047587"/>
    </isoform>
</comment>
<comment type="tissue specificity">
    <text>Widely expressed, with a higher expression in fetal and adult kidney.</text>
</comment>
<comment type="domain">
    <text evidence="1">The pseudo-CRIB domain together with the PDZ domain is required for the interaction with Rho small GTPases.</text>
</comment>
<comment type="similarity">
    <text evidence="8">Belongs to the PAR6 family.</text>
</comment>
<evidence type="ECO:0000250" key="1"/>
<evidence type="ECO:0000255" key="2">
    <source>
        <dbReference type="PROSITE-ProRule" id="PRU00143"/>
    </source>
</evidence>
<evidence type="ECO:0000255" key="3">
    <source>
        <dbReference type="PROSITE-ProRule" id="PRU01081"/>
    </source>
</evidence>
<evidence type="ECO:0000256" key="4">
    <source>
        <dbReference type="SAM" id="MobiDB-lite"/>
    </source>
</evidence>
<evidence type="ECO:0000269" key="5">
    <source>
    </source>
</evidence>
<evidence type="ECO:0000269" key="6">
    <source>
    </source>
</evidence>
<evidence type="ECO:0000303" key="7">
    <source ref="2"/>
</evidence>
<evidence type="ECO:0000305" key="8"/>
<gene>
    <name type="primary">PARD6G</name>
    <name type="synonym">PAR6G</name>
</gene>
<reference key="1">
    <citation type="journal article" date="2001" name="Genes Cells">
        <title>Human homologues of the Caenorhabditis elegans cell polarity protein PAR6 as an adaptor that links the small GTPases Rac and Cdc42 to atypical protein kinase C.</title>
        <authorList>
            <person name="Noda Y."/>
            <person name="Takeya R."/>
            <person name="Ohno S."/>
            <person name="Naito S."/>
            <person name="Ito T."/>
            <person name="Sumimoto H."/>
        </authorList>
    </citation>
    <scope>NUCLEOTIDE SEQUENCE [MRNA] (ISOFORM 1)</scope>
    <scope>INTERACTION WITH RAC1; CDC42; PRKCI AND PRKCZ</scope>
    <source>
        <tissue>Neuroblastoma</tissue>
    </source>
</reference>
<reference key="2">
    <citation type="submission" date="2004-05" db="EMBL/GenBank/DDBJ databases">
        <title>Splicing variants of the cell polarity protein PAR-6.</title>
        <authorList>
            <person name="Noda Y."/>
            <person name="Kohjima M."/>
            <person name="Izaki T."/>
            <person name="Sumimoto H."/>
        </authorList>
    </citation>
    <scope>NUCLEOTIDE SEQUENCE [MRNA] (ISOFORM 2)</scope>
</reference>
<reference key="3">
    <citation type="journal article" date="2005" name="Nature">
        <title>DNA sequence and analysis of human chromosome 18.</title>
        <authorList>
            <person name="Nusbaum C."/>
            <person name="Zody M.C."/>
            <person name="Borowsky M.L."/>
            <person name="Kamal M."/>
            <person name="Kodira C.D."/>
            <person name="Taylor T.D."/>
            <person name="Whittaker C.A."/>
            <person name="Chang J.L."/>
            <person name="Cuomo C.A."/>
            <person name="Dewar K."/>
            <person name="FitzGerald M.G."/>
            <person name="Yang X."/>
            <person name="Abouelleil A."/>
            <person name="Allen N.R."/>
            <person name="Anderson S."/>
            <person name="Bloom T."/>
            <person name="Bugalter B."/>
            <person name="Butler J."/>
            <person name="Cook A."/>
            <person name="DeCaprio D."/>
            <person name="Engels R."/>
            <person name="Garber M."/>
            <person name="Gnirke A."/>
            <person name="Hafez N."/>
            <person name="Hall J.L."/>
            <person name="Norman C.H."/>
            <person name="Itoh T."/>
            <person name="Jaffe D.B."/>
            <person name="Kuroki Y."/>
            <person name="Lehoczky J."/>
            <person name="Lui A."/>
            <person name="Macdonald P."/>
            <person name="Mauceli E."/>
            <person name="Mikkelsen T.S."/>
            <person name="Naylor J.W."/>
            <person name="Nicol R."/>
            <person name="Nguyen C."/>
            <person name="Noguchi H."/>
            <person name="O'Leary S.B."/>
            <person name="Piqani B."/>
            <person name="Smith C.L."/>
            <person name="Talamas J.A."/>
            <person name="Topham K."/>
            <person name="Totoki Y."/>
            <person name="Toyoda A."/>
            <person name="Wain H.M."/>
            <person name="Young S.K."/>
            <person name="Zeng Q."/>
            <person name="Zimmer A.R."/>
            <person name="Fujiyama A."/>
            <person name="Hattori M."/>
            <person name="Birren B.W."/>
            <person name="Sakaki Y."/>
            <person name="Lander E.S."/>
        </authorList>
    </citation>
    <scope>NUCLEOTIDE SEQUENCE [LARGE SCALE GENOMIC DNA]</scope>
</reference>
<reference key="4">
    <citation type="journal article" date="2004" name="Genome Res.">
        <title>The status, quality, and expansion of the NIH full-length cDNA project: the Mammalian Gene Collection (MGC).</title>
        <authorList>
            <consortium name="The MGC Project Team"/>
        </authorList>
    </citation>
    <scope>NUCLEOTIDE SEQUENCE [LARGE SCALE MRNA] (ISOFORM 1)</scope>
    <source>
        <tissue>Placenta</tissue>
    </source>
</reference>
<reference key="5">
    <citation type="journal article" date="2000" name="Nat. Cell Biol.">
        <title>The cell-polarity protein Par6 links Par3 and atypical protein kinase C to Cdc42.</title>
        <authorList>
            <person name="Joberty G."/>
            <person name="Petersen C."/>
            <person name="Gao L."/>
            <person name="Macara I.G."/>
        </authorList>
    </citation>
    <scope>INTERACTION WITH RHOQ</scope>
</reference>
<protein>
    <recommendedName>
        <fullName>Partitioning defective 6 homolog gamma</fullName>
        <shortName>PAR-6 gamma</shortName>
    </recommendedName>
    <alternativeName>
        <fullName>PAR6D</fullName>
    </alternativeName>
</protein>
<keyword id="KW-0025">Alternative splicing</keyword>
<keyword id="KW-0131">Cell cycle</keyword>
<keyword id="KW-0132">Cell division</keyword>
<keyword id="KW-0965">Cell junction</keyword>
<keyword id="KW-1003">Cell membrane</keyword>
<keyword id="KW-0963">Cytoplasm</keyword>
<keyword id="KW-0472">Membrane</keyword>
<keyword id="KW-1267">Proteomics identification</keyword>
<keyword id="KW-1185">Reference proteome</keyword>
<keyword id="KW-0796">Tight junction</keyword>
<feature type="chain" id="PRO_0000112518" description="Partitioning defective 6 homolog gamma">
    <location>
        <begin position="1"/>
        <end position="376"/>
    </location>
</feature>
<feature type="domain" description="PB1" evidence="3">
    <location>
        <begin position="18"/>
        <end position="98"/>
    </location>
</feature>
<feature type="domain" description="Pseudo-CRIB">
    <location>
        <begin position="134"/>
        <end position="151"/>
    </location>
</feature>
<feature type="domain" description="PDZ" evidence="2">
    <location>
        <begin position="158"/>
        <end position="251"/>
    </location>
</feature>
<feature type="region of interest" description="Interaction with PARD3 and CDC42" evidence="1">
    <location>
        <begin position="127"/>
        <end position="254"/>
    </location>
</feature>
<feature type="region of interest" description="Disordered" evidence="4">
    <location>
        <begin position="356"/>
        <end position="376"/>
    </location>
</feature>
<feature type="compositionally biased region" description="Basic and acidic residues" evidence="4">
    <location>
        <begin position="367"/>
        <end position="376"/>
    </location>
</feature>
<feature type="splice variant" id="VSP_047586" description="In isoform 2." evidence="7">
    <original>EEAERGSLG</original>
    <variation>DDGALRPGT</variation>
    <location>
        <begin position="99"/>
        <end position="107"/>
    </location>
</feature>
<feature type="splice variant" id="VSP_047587" description="In isoform 2." evidence="7">
    <location>
        <begin position="108"/>
        <end position="376"/>
    </location>
</feature>